<organism>
    <name type="scientific">Aspergillus flavus (strain ATCC 200026 / FGSC A1120 / IAM 13836 / NRRL 3357 / JCM 12722 / SRRC 167)</name>
    <dbReference type="NCBI Taxonomy" id="332952"/>
    <lineage>
        <taxon>Eukaryota</taxon>
        <taxon>Fungi</taxon>
        <taxon>Dikarya</taxon>
        <taxon>Ascomycota</taxon>
        <taxon>Pezizomycotina</taxon>
        <taxon>Eurotiomycetes</taxon>
        <taxon>Eurotiomycetidae</taxon>
        <taxon>Eurotiales</taxon>
        <taxon>Aspergillaceae</taxon>
        <taxon>Aspergillus</taxon>
        <taxon>Aspergillus subgen. Circumdati</taxon>
    </lineage>
</organism>
<comment type="function">
    <text evidence="2">Ribosomally synthesized cyclic peptide ustiloxin B precursor: Part of the gene cluster that mediates the biosynthesis of the secondary metabolite ustiloxin B, an antimitotic tetrapeptide (PubMed:24841822). The ustA translated product contains a 16-fold repeated peptide embedding the tetrapeptide Tyr-Ala-Ile-Gly, that is converted into the cyclic moiety of ustiloxin B (PubMed:24841822).</text>
</comment>
<comment type="pathway">
    <text evidence="2">Mycotoxin biosynthesis.</text>
</comment>
<comment type="PTM">
    <text evidence="2 3 4">UstA is processed by the subtilisin-like endoprotease kex2 that is outside the ustiloxin B gene cluster, at the C-terminal side of Arg-Lys, after transfer to Golgi apparatus through the endoplasmic reticulum (ER) (PubMed:24841822). Cleavage by kex2 generates 16 peptides YAIG-I to YAIG-XVI (PubMed:24841822). To process the precursor peptide further, at least two peptidases are necessary to cleave the N-terminal and C-terminal sides of the Tyr-Ala-Ile-Gly core peptide which serves as backbone for the synthesis of ustiloxin B, through cyclization and modification of the tyrosine (PubMed:24841822). One of the two peptidases must be the serine peptidase ustP; and the other pepdidase is probably ustH (PubMed:24841822). Macrocyclization of the core peptide derived from ustA requires the tyrosinase ustQ, as well as the homologous oxidases ustYa and ustYb, and leads to the production of the first cyclization product N-desmethylustiloxin F (PubMed:26703898, PubMed:27166860). For the formation of N-desmethylustiloxin F, three oxidation steps are required, hydroxylation at the benzylic position, hydroxylation at either the aromatic ring of Tyr or beta-position of Ile, and oxidative cyclization (PubMed:27166860). UstQ may catalyze the oxidation of a phenol moiety, whereas the ustYa and ustYb are most likely responsible for the remaining two-step oxidations (PubMed:27166860). N-desmethylustiloxin F is then methylated by ustM to yield ustiloxin F which in turn substrate of the cytochrome P450 monooxygenase ustC which catalyzes the formation of S-deoxyustiloxin H (PubMed:27166860). The flavoprotein monooxygenases ustF1 and ustF2 then participate in the modification of the side chain of S-deoxyustiloxin H, leading to the synthesis of an oxime intermediate, via ustiloxin H (PubMed:27166860). Finally, carboxylative dehydration performed by the cysteine desulfurase-like protein ustD yields ustiloxin B (PubMed:27166860).</text>
</comment>
<comment type="disruption phenotype">
    <text evidence="2 3">Impairs the production of ustiloxin B and its intermediate ustiloxin F (PubMed:24841822, PubMed:26703898).</text>
</comment>
<keyword id="KW-0732">Signal</keyword>
<accession>B8NM66</accession>
<sequence>MKLILTLLVSGLCALAAPAAKRDGVEDYAIGIDKRNSVEDYAIGIDKRNSVEDYAIGIDKRNSVEDYAIGIDKRNSVEDYAIGIDKRNTVEDYAIGIDKRNSVEDYAIGIDKRNTVEDYAIGIDKRNSVEDYAIGIDKRNSVEDYAIGIDKRGGSVEDYAIGIDKRNSVEDYAIGIDKRNSVEDYAIGIDKRGSVEDYAIGIDKKRGTVEDYAIGIDKRGGSVEDYAIGIDKRHGGH</sequence>
<protein>
    <recommendedName>
        <fullName evidence="5">Ribosomally synthesized cyclic peptide ustiloxin B precursosr</fullName>
    </recommendedName>
    <alternativeName>
        <fullName evidence="5">Ustiloxin B biosynthesis protein A</fullName>
    </alternativeName>
    <component>
        <recommendedName>
            <fullName evidence="5">YAIG-I</fullName>
        </recommendedName>
    </component>
    <component>
        <recommendedName>
            <fullName evidence="5">YAIG-II</fullName>
        </recommendedName>
    </component>
    <component>
        <recommendedName>
            <fullName evidence="5">YAIG-III</fullName>
        </recommendedName>
    </component>
    <component>
        <recommendedName>
            <fullName evidence="5">YAIG-IV</fullName>
        </recommendedName>
    </component>
    <component>
        <recommendedName>
            <fullName evidence="5">YAIG-V</fullName>
        </recommendedName>
    </component>
    <component>
        <recommendedName>
            <fullName evidence="5">YAIG-VI</fullName>
        </recommendedName>
    </component>
    <component>
        <recommendedName>
            <fullName evidence="5">YAIG-VII</fullName>
        </recommendedName>
    </component>
    <component>
        <recommendedName>
            <fullName evidence="5">YAIG-VIII</fullName>
        </recommendedName>
    </component>
    <component>
        <recommendedName>
            <fullName evidence="5">YAIG-IX</fullName>
        </recommendedName>
    </component>
    <component>
        <recommendedName>
            <fullName evidence="5">YAIG-X</fullName>
        </recommendedName>
    </component>
    <component>
        <recommendedName>
            <fullName evidence="5">YAIG-XI</fullName>
        </recommendedName>
    </component>
    <component>
        <recommendedName>
            <fullName evidence="5">YAIG-XII</fullName>
        </recommendedName>
    </component>
    <component>
        <recommendedName>
            <fullName evidence="5">YAIG-XIII</fullName>
        </recommendedName>
    </component>
    <component>
        <recommendedName>
            <fullName evidence="5">YAIG-XIV</fullName>
        </recommendedName>
    </component>
    <component>
        <recommendedName>
            <fullName evidence="5">YAIG-XV</fullName>
        </recommendedName>
    </component>
    <component>
        <recommendedName>
            <fullName evidence="5">YAIG-XVI</fullName>
        </recommendedName>
    </component>
</protein>
<dbReference type="EMBL" id="EQ963480">
    <property type="protein sequence ID" value="EED49417.1"/>
    <property type="molecule type" value="Genomic_DNA"/>
</dbReference>
<dbReference type="RefSeq" id="XP_002381318.1">
    <property type="nucleotide sequence ID" value="XM_002381277.1"/>
</dbReference>
<dbReference type="EnsemblFungi" id="EED49417">
    <property type="protein sequence ID" value="EED49417"/>
    <property type="gene ID" value="AFLA_094980"/>
</dbReference>
<dbReference type="VEuPathDB" id="FungiDB:AFLA_009734"/>
<dbReference type="eggNOG" id="ENOG502SJ4U">
    <property type="taxonomic scope" value="Eukaryota"/>
</dbReference>
<dbReference type="HOGENOM" id="CLU_1384495_0_0_1"/>
<dbReference type="OMA" id="IDKRSAV"/>
<dbReference type="PANTHER" id="PTHR34593">
    <property type="entry name" value="MATING RESPONSE PROTEIN POI2"/>
    <property type="match status" value="1"/>
</dbReference>
<dbReference type="PANTHER" id="PTHR34593:SF9">
    <property type="entry name" value="MATING RESPONSE PROTEIN POI2"/>
    <property type="match status" value="1"/>
</dbReference>
<gene>
    <name evidence="5" type="primary">ustA</name>
    <name type="ORF">AFLA_094980</name>
</gene>
<evidence type="ECO:0000255" key="1"/>
<evidence type="ECO:0000269" key="2">
    <source>
    </source>
</evidence>
<evidence type="ECO:0000269" key="3">
    <source>
    </source>
</evidence>
<evidence type="ECO:0000269" key="4">
    <source>
    </source>
</evidence>
<evidence type="ECO:0000303" key="5">
    <source>
    </source>
</evidence>
<evidence type="ECO:0000305" key="6">
    <source>
    </source>
</evidence>
<proteinExistence type="evidence at protein level"/>
<name>USTA_ASPFN</name>
<feature type="signal peptide" evidence="1">
    <location>
        <begin position="1"/>
        <end position="19"/>
    </location>
</feature>
<feature type="propeptide" id="PRO_0000437276" evidence="6">
    <location>
        <begin position="20"/>
        <end position="22"/>
    </location>
</feature>
<feature type="peptide" id="PRO_5002878297" description="YAIG-I" evidence="6">
    <location>
        <begin position="23"/>
        <end position="35"/>
    </location>
</feature>
<feature type="peptide" id="PRO_0000437277" description="YAIG-II" evidence="6">
    <location>
        <begin position="36"/>
        <end position="48"/>
    </location>
</feature>
<feature type="peptide" id="PRO_0000437278" description="YAIG-III" evidence="6">
    <location>
        <begin position="49"/>
        <end position="61"/>
    </location>
</feature>
<feature type="peptide" id="PRO_0000437279" description="YAIG-IV" evidence="6">
    <location>
        <begin position="62"/>
        <end position="74"/>
    </location>
</feature>
<feature type="peptide" id="PRO_0000437280" description="YAIG-V" evidence="6">
    <location>
        <begin position="75"/>
        <end position="87"/>
    </location>
</feature>
<feature type="peptide" id="PRO_0000437281" description="YAIG-VI" evidence="6">
    <location>
        <begin position="88"/>
        <end position="100"/>
    </location>
</feature>
<feature type="peptide" id="PRO_0000437282" description="YAIG-VII" evidence="6">
    <location>
        <begin position="101"/>
        <end position="113"/>
    </location>
</feature>
<feature type="peptide" id="PRO_0000437283" description="YAIG-VIII" evidence="6">
    <location>
        <begin position="114"/>
        <end position="126"/>
    </location>
</feature>
<feature type="peptide" id="PRO_0000437284" description="YAIG-IX" evidence="6">
    <location>
        <begin position="127"/>
        <end position="139"/>
    </location>
</feature>
<feature type="peptide" id="PRO_0000437285" description="YAIG-X" evidence="6">
    <location>
        <begin position="140"/>
        <end position="152"/>
    </location>
</feature>
<feature type="peptide" id="PRO_0000437286" description="YAIG-XI" evidence="6">
    <location>
        <begin position="153"/>
        <end position="166"/>
    </location>
</feature>
<feature type="peptide" id="PRO_0000437287" description="YAIG-XII" evidence="6">
    <location>
        <begin position="167"/>
        <end position="179"/>
    </location>
</feature>
<feature type="peptide" id="PRO_0000437288" description="YAIG-XIII" evidence="6">
    <location>
        <begin position="180"/>
        <end position="192"/>
    </location>
</feature>
<feature type="peptide" id="PRO_0000437289" description="YAIG-XIV" evidence="6">
    <location>
        <begin position="193"/>
        <end position="206"/>
    </location>
</feature>
<feature type="peptide" id="PRO_0000437290" description="YAIG-XV" evidence="6">
    <location>
        <begin position="207"/>
        <end position="219"/>
    </location>
</feature>
<feature type="peptide" id="PRO_0000437291" description="YAIG-XVI" evidence="6">
    <location>
        <begin position="220"/>
        <end position="233"/>
    </location>
</feature>
<feature type="propeptide" id="PRO_0000437292" evidence="6">
    <location>
        <begin position="234"/>
        <end position="237"/>
    </location>
</feature>
<reference key="1">
    <citation type="journal article" date="2015" name="Genome Announc.">
        <title>Genome sequence of Aspergillus flavus NRRL 3357, a strain that causes aflatoxin contamination of food and feed.</title>
        <authorList>
            <person name="Nierman W.C."/>
            <person name="Yu J."/>
            <person name="Fedorova-Abrams N.D."/>
            <person name="Losada L."/>
            <person name="Cleveland T.E."/>
            <person name="Bhatnagar D."/>
            <person name="Bennett J.W."/>
            <person name="Dean R."/>
            <person name="Payne G.A."/>
        </authorList>
    </citation>
    <scope>NUCLEOTIDE SEQUENCE [LARGE SCALE GENOMIC DNA]</scope>
    <source>
        <strain>ATCC 200026 / FGSC A1120 / IAM 13836 / NRRL 3357 / JCM 12722 / SRRC 167</strain>
    </source>
</reference>
<reference key="2">
    <citation type="journal article" date="2014" name="Fungal Genet. Biol.">
        <title>Characterization of the biosynthetic gene cluster for the ribosomally synthesized cyclic peptide ustiloxin B in Aspergillus flavus.</title>
        <authorList>
            <person name="Umemura M."/>
            <person name="Nagano N."/>
            <person name="Koike H."/>
            <person name="Kawano J."/>
            <person name="Ishii T."/>
            <person name="Miyamura Y."/>
            <person name="Kikuchi M."/>
            <person name="Tamano K."/>
            <person name="Yu J."/>
            <person name="Shin-ya K."/>
            <person name="Machida M."/>
        </authorList>
    </citation>
    <scope>FUNCTION</scope>
    <scope>DISRUPTION PHENOTYPE</scope>
    <scope>CLEAVAGE BY KEX2</scope>
    <scope>POST-TRANSLATIONAL MODIFICATIONS TO YIELD USTILOXIN B</scope>
</reference>
<reference key="3">
    <citation type="journal article" date="2016" name="Angew. Chem. Int. Ed.">
        <title>Unveiling the biosynthetic pathway of the ribosomally synthesized and post-translationally modified peptide ustiloxin B in filamentous fungi.</title>
        <authorList>
            <person name="Ye Y."/>
            <person name="Minami A."/>
            <person name="Igarashi Y."/>
            <person name="Izumikawa M."/>
            <person name="Umemura M."/>
            <person name="Nagano N."/>
            <person name="Machida M."/>
            <person name="Kawahara T."/>
            <person name="Shin-Ya K."/>
            <person name="Gomi K."/>
            <person name="Oikawa H."/>
        </authorList>
    </citation>
    <scope>FUNCTION</scope>
    <scope>POST-TRANSLATIONAL MODIFICATIONS TO YIELD USTILOXIN B</scope>
</reference>
<reference key="4">
    <citation type="journal article" date="2016" name="Fungal Genet. Biol.">
        <title>Class of cyclic ribosomal peptide synthetic genes in filamentous fungi.</title>
        <authorList>
            <person name="Nagano N."/>
            <person name="Umemura M."/>
            <person name="Izumikawa M."/>
            <person name="Kawano J."/>
            <person name="Ishii T."/>
            <person name="Kikuchi M."/>
            <person name="Tomii K."/>
            <person name="Kumagai T."/>
            <person name="Yoshimi A."/>
            <person name="Machida M."/>
            <person name="Abe K."/>
            <person name="Shin-ya K."/>
            <person name="Asai K."/>
        </authorList>
    </citation>
    <scope>FUNCTION</scope>
    <scope>DISRUPTION PHENOTYPE</scope>
    <scope>POST-TRANSLATIONAL MODIFICATIONS TO YIELD USTILOXIN B</scope>
</reference>